<accession>B7S4N9</accession>
<accession>B5L5M8</accession>
<accession>B7S4N8</accession>
<accession>Q7LZE4</accession>
<keyword id="KW-1203">Blood coagulation cascade inhibiting toxin</keyword>
<keyword id="KW-0108">Calcium channel impairing toxin</keyword>
<keyword id="KW-1221">Calcium-activated potassium channel impairing toxin</keyword>
<keyword id="KW-0903">Direct protein sequencing</keyword>
<keyword id="KW-1015">Disulfide bond</keyword>
<keyword id="KW-1199">Hemostasis impairing toxin</keyword>
<keyword id="KW-0872">Ion channel impairing toxin</keyword>
<keyword id="KW-0528">Neurotoxin</keyword>
<keyword id="KW-0632">Potassium channel impairing toxin</keyword>
<keyword id="KW-0646">Protease inhibitor</keyword>
<keyword id="KW-0964">Secreted</keyword>
<keyword id="KW-0722">Serine protease inhibitor</keyword>
<keyword id="KW-0732">Signal</keyword>
<keyword id="KW-0800">Toxin</keyword>
<keyword id="KW-1218">Voltage-gated calcium channel impairing toxin</keyword>
<dbReference type="EMBL" id="EF112394">
    <property type="protein sequence ID" value="ABO31438.1"/>
    <property type="molecule type" value="mRNA"/>
</dbReference>
<dbReference type="EMBL" id="EF112393">
    <property type="protein sequence ID" value="ABO31437.1"/>
    <property type="molecule type" value="mRNA"/>
</dbReference>
<dbReference type="EMBL" id="EU401816">
    <property type="protein sequence ID" value="ACC77765.1"/>
    <property type="molecule type" value="Genomic_DNA"/>
</dbReference>
<dbReference type="PIR" id="A44180">
    <property type="entry name" value="A44180"/>
</dbReference>
<dbReference type="SMR" id="B7S4N9"/>
<dbReference type="MEROPS" id="I02.062"/>
<dbReference type="GO" id="GO:0005615">
    <property type="term" value="C:extracellular space"/>
    <property type="evidence" value="ECO:0007669"/>
    <property type="project" value="TreeGrafter"/>
</dbReference>
<dbReference type="GO" id="GO:0005246">
    <property type="term" value="F:calcium channel regulator activity"/>
    <property type="evidence" value="ECO:0007669"/>
    <property type="project" value="UniProtKB-KW"/>
</dbReference>
<dbReference type="GO" id="GO:0015459">
    <property type="term" value="F:potassium channel regulator activity"/>
    <property type="evidence" value="ECO:0007669"/>
    <property type="project" value="UniProtKB-KW"/>
</dbReference>
<dbReference type="GO" id="GO:0004867">
    <property type="term" value="F:serine-type endopeptidase inhibitor activity"/>
    <property type="evidence" value="ECO:0007669"/>
    <property type="project" value="UniProtKB-KW"/>
</dbReference>
<dbReference type="GO" id="GO:0090729">
    <property type="term" value="F:toxin activity"/>
    <property type="evidence" value="ECO:0007669"/>
    <property type="project" value="UniProtKB-KW"/>
</dbReference>
<dbReference type="CDD" id="cd22608">
    <property type="entry name" value="Kunitz_PPTI-like"/>
    <property type="match status" value="1"/>
</dbReference>
<dbReference type="FunFam" id="4.10.410.10:FF:000004">
    <property type="entry name" value="Tissue factor pathway inhibitor"/>
    <property type="match status" value="1"/>
</dbReference>
<dbReference type="Gene3D" id="4.10.410.10">
    <property type="entry name" value="Pancreatic trypsin inhibitor Kunitz domain"/>
    <property type="match status" value="1"/>
</dbReference>
<dbReference type="InterPro" id="IPR002223">
    <property type="entry name" value="Kunitz_BPTI"/>
</dbReference>
<dbReference type="InterPro" id="IPR036880">
    <property type="entry name" value="Kunitz_BPTI_sf"/>
</dbReference>
<dbReference type="InterPro" id="IPR020901">
    <property type="entry name" value="Prtase_inh_Kunz-CS"/>
</dbReference>
<dbReference type="InterPro" id="IPR050098">
    <property type="entry name" value="TFPI/VKTCI-like"/>
</dbReference>
<dbReference type="PANTHER" id="PTHR10083:SF383">
    <property type="entry name" value="BPTI_KUNITZ INHIBITOR DOMAIN-CONTAINING PROTEIN"/>
    <property type="match status" value="1"/>
</dbReference>
<dbReference type="PANTHER" id="PTHR10083">
    <property type="entry name" value="KUNITZ-TYPE PROTEASE INHIBITOR-RELATED"/>
    <property type="match status" value="1"/>
</dbReference>
<dbReference type="Pfam" id="PF00014">
    <property type="entry name" value="Kunitz_BPTI"/>
    <property type="match status" value="1"/>
</dbReference>
<dbReference type="PRINTS" id="PR00759">
    <property type="entry name" value="BASICPTASE"/>
</dbReference>
<dbReference type="SMART" id="SM00131">
    <property type="entry name" value="KU"/>
    <property type="match status" value="1"/>
</dbReference>
<dbReference type="SUPFAM" id="SSF57362">
    <property type="entry name" value="BPTI-like"/>
    <property type="match status" value="1"/>
</dbReference>
<dbReference type="PROSITE" id="PS00280">
    <property type="entry name" value="BPTI_KUNITZ_1"/>
    <property type="match status" value="1"/>
</dbReference>
<dbReference type="PROSITE" id="PS50279">
    <property type="entry name" value="BPTI_KUNITZ_2"/>
    <property type="match status" value="1"/>
</dbReference>
<sequence>MSSGGLLLLLGLLTLWEVLTPVSSKDRPKFCHLPPKPGPCRAAIPRFYYNPHSKQCEKFIYGGCHGNANSFKTPDECNYTCLGVSLPK</sequence>
<organism>
    <name type="scientific">Oxyuranus scutellatus scutellatus</name>
    <name type="common">Australian taipan</name>
    <name type="synonym">Coastal taipan</name>
    <dbReference type="NCBI Taxonomy" id="8667"/>
    <lineage>
        <taxon>Eukaryota</taxon>
        <taxon>Metazoa</taxon>
        <taxon>Chordata</taxon>
        <taxon>Craniata</taxon>
        <taxon>Vertebrata</taxon>
        <taxon>Euteleostomi</taxon>
        <taxon>Lepidosauria</taxon>
        <taxon>Squamata</taxon>
        <taxon>Bifurcata</taxon>
        <taxon>Unidentata</taxon>
        <taxon>Episquamata</taxon>
        <taxon>Toxicofera</taxon>
        <taxon>Serpentes</taxon>
        <taxon>Colubroidea</taxon>
        <taxon>Elapidae</taxon>
        <taxon>Hydrophiinae</taxon>
        <taxon>Oxyuranus</taxon>
    </lineage>
</organism>
<protein>
    <recommendedName>
        <fullName>Kunitz-type serine protease inhibitor taicotoxin</fullName>
    </recommendedName>
    <alternativeName>
        <fullName>Taicatoxin, serine protease inhibitor component</fullName>
        <shortName>TCX</shortName>
        <shortName>TSPI</shortName>
    </alternativeName>
    <alternativeName>
        <fullName>Venom protease inhibitor 1</fullName>
    </alternativeName>
    <alternativeName>
        <fullName>Venom protease inhibitor 2</fullName>
    </alternativeName>
</protein>
<feature type="signal peptide" evidence="3 4">
    <location>
        <begin position="1"/>
        <end position="24"/>
    </location>
</feature>
<feature type="chain" id="PRO_0000155443" description="Kunitz-type serine protease inhibitor taicotoxin">
    <location>
        <begin position="25"/>
        <end position="86"/>
    </location>
</feature>
<feature type="propeptide" id="PRO_0000376929">
    <location>
        <begin position="87"/>
        <end position="88"/>
    </location>
</feature>
<feature type="domain" description="BPTI/Kunitz inhibitor" evidence="2">
    <location>
        <begin position="31"/>
        <end position="81"/>
    </location>
</feature>
<feature type="site" description="Reactive bond for trypsin" evidence="1">
    <location>
        <begin position="41"/>
        <end position="42"/>
    </location>
</feature>
<feature type="disulfide bond" evidence="2">
    <location>
        <begin position="31"/>
        <end position="81"/>
    </location>
</feature>
<feature type="disulfide bond" evidence="2">
    <location>
        <begin position="40"/>
        <end position="64"/>
    </location>
</feature>
<feature type="disulfide bond" evidence="2">
    <location>
        <begin position="56"/>
        <end position="77"/>
    </location>
</feature>
<feature type="sequence conflict" description="In Ref. 2; ACC77765." evidence="5" ref="2">
    <original>EV</original>
    <variation>AE</variation>
    <location>
        <begin position="17"/>
        <end position="18"/>
    </location>
</feature>
<feature type="sequence conflict" description="In Ref. 2; ACC77765." evidence="5" ref="2">
    <original>SK</original>
    <variation>GQ</variation>
    <location>
        <begin position="24"/>
        <end position="25"/>
    </location>
</feature>
<feature type="sequence conflict" description="In Ref. 2; ACC77765." evidence="5" ref="2">
    <original>K</original>
    <variation>Q</variation>
    <location>
        <position position="25"/>
    </location>
</feature>
<feature type="sequence conflict" description="In Ref. 2; ACC77765 and 1; ABO31437." evidence="5" ref="2 1">
    <original>K</original>
    <variation>N</variation>
    <location>
        <position position="36"/>
    </location>
</feature>
<feature type="sequence conflict" description="In Ref. 3; AA sequence." evidence="5" ref="3">
    <original>S</original>
    <variation>K</variation>
    <location>
        <position position="70"/>
    </location>
</feature>
<evidence type="ECO:0000250" key="1"/>
<evidence type="ECO:0000255" key="2">
    <source>
        <dbReference type="PROSITE-ProRule" id="PRU00031"/>
    </source>
</evidence>
<evidence type="ECO:0000269" key="3">
    <source>
    </source>
</evidence>
<evidence type="ECO:0000269" key="4">
    <source>
    </source>
</evidence>
<evidence type="ECO:0000305" key="5"/>
<comment type="function">
    <text>Heterotrimer: blocks the voltage-dependent L-type calcium channels (Cav) from the heart, and the small conductance calcium-activated potassium channels (KCa) in the chromaffin cells and in the brain. Is very toxic to mice.</text>
</comment>
<comment type="function">
    <text>Monomer: serine protease inhibitor that inhibits plasma kallikrein (Ki=0.057 nM), tissue kallikrein (Ki=0.23 nM), trypsin (Ki=0.31 nM), plasmin (Ki=6.1 nM), elastase (Ki=201 nM), factor Xa (Ki=871 nM), alpha-factor XIIa (Ki=2380 nM). Does not inhibit APC, urokinase-type plasminogen activator (uPA/PLAU), tissue plasminogen activator (tPA/PLAT), thrombin and factor VIIa. In addition, the monomer inhibits fibrinolysis in whole blood and prolonged the intrinsec clotting time.</text>
</comment>
<comment type="subunit">
    <text evidence="3">Heterotrimer composed of an alpha-neurotoxin-like peptide of 8 kDa (AC P0CJ35), a neurotoxic phospholipase of 16 kDa (AC Q7LZG2) and this serine protease inhibitor of 7 kDa at an approximate stoichiometry of 1:1:4; non-covalently linked.</text>
</comment>
<comment type="subcellular location">
    <subcellularLocation>
        <location evidence="3">Secreted</location>
    </subcellularLocation>
</comment>
<comment type="tissue specificity">
    <text evidence="3">Expressed by the venom gland.</text>
</comment>
<comment type="toxic dose">
    <text evidence="3">LD(50) of the heterotrimer is 50-100 ug/kg to mice.</text>
</comment>
<comment type="similarity">
    <text evidence="5">Belongs to the venom Kunitz-type family.</text>
</comment>
<comment type="online information" name="Wikipedia">
    <link uri="https://en.wikipedia.org/wiki/Taicatoxin"/>
    <text>Taicatoxin entry</text>
</comment>
<proteinExistence type="evidence at protein level"/>
<name>VKT_OXYSC</name>
<reference key="1">
    <citation type="submission" date="2006-11" db="EMBL/GenBank/DDBJ databases">
        <title>Characterization of a serine protease inhibitor from Oxyuranus scutellatus venom.</title>
        <authorList>
            <person name="Earl S.T."/>
            <person name="Flight S."/>
            <person name="Liao A."/>
            <person name="Masci P.P."/>
            <person name="de Jersey J."/>
            <person name="Lavin M.F."/>
        </authorList>
    </citation>
    <scope>NUCLEOTIDE SEQUENCE [MRNA]</scope>
    <source>
        <tissue>Venom gland</tissue>
    </source>
</reference>
<reference key="2">
    <citation type="journal article" date="2008" name="Cell. Mol. Life Sci.">
        <title>Common evolution of waprin and Kunitz-like toxin families in Australian venomous snakes.</title>
        <authorList>
            <person name="St Pierre L."/>
            <person name="Earl S.T."/>
            <person name="Filippovich I."/>
            <person name="Sorokina N."/>
            <person name="Masci P.P."/>
            <person name="De Jersey J."/>
            <person name="Lavin M.F."/>
        </authorList>
    </citation>
    <scope>NUCLEOTIDE SEQUENCE [GENOMIC DNA]</scope>
    <source>
        <tissue>Venom gland</tissue>
    </source>
</reference>
<reference key="3">
    <citation type="journal article" date="1992" name="Toxicon">
        <title>Isolation and physiological characterization of taicatoxin, a complex toxin with specific effects on calcium channels.</title>
        <authorList>
            <person name="Possani L.D."/>
            <person name="Martin B.M."/>
            <person name="Yatani A."/>
            <person name="Mochca-Morales J."/>
            <person name="Zamudio F.Z."/>
            <person name="Gurrola G.B."/>
            <person name="Brown A.M."/>
        </authorList>
    </citation>
    <scope>PROTEIN SEQUENCE OF 25-86</scope>
    <scope>FUNCTION</scope>
    <scope>SUBUNIT</scope>
    <scope>SUBCELLULAR LOCATION</scope>
    <scope>TISSUE SPECIFICITY</scope>
    <scope>TOXIC DOSE</scope>
    <source>
        <tissue>Venom</tissue>
    </source>
</reference>
<reference key="4">
    <citation type="journal article" date="2012" name="Biochimie">
        <title>Identification and characterisation of Kunitz-type plasma kallikrein inhibitors unique to Oxyuranus sp. snake venoms.</title>
        <authorList>
            <person name="Earl S.T."/>
            <person name="Richards R."/>
            <person name="Johnson L.A."/>
            <person name="Flight S."/>
            <person name="Anderson S."/>
            <person name="Liao A."/>
            <person name="de Jersey J."/>
            <person name="Masci P.P."/>
            <person name="Lavin M.F."/>
        </authorList>
    </citation>
    <scope>PROTEIN SEQUENCE OF 25-36</scope>
    <scope>FUNCTION OF THE MONOMER</scope>
    <scope>IDENTIFICATION BY MASS SPECTROMETRY</scope>
</reference>
<reference key="5">
    <citation type="journal article" date="1996" name="Mol. Cell. Biochem.">
        <title>Effect of TaiCatoxin (TCX) on the electrophysiological, mechanical and biochemical characteristics of spontaneously beating ventricular cardiomyocytes.</title>
        <authorList>
            <person name="Fantini E."/>
            <person name="Athias P."/>
            <person name="Tirosh R."/>
            <person name="Pinson A."/>
        </authorList>
    </citation>
    <scope>FUNCTION</scope>
</reference>
<reference key="6">
    <citation type="journal article" date="1997" name="J. Biol. Chem.">
        <title>A novel small conductance Ca2+-activated K+ channel blocker from Oxyuranus scutellatus taipan venom. Re-evaluation of taicatoxin as a selective Ca2+ channel probe.</title>
        <authorList>
            <person name="Doorty K.B."/>
            <person name="Bevan S."/>
            <person name="Wadsworth J.D.F."/>
            <person name="Strong P.N."/>
        </authorList>
    </citation>
    <scope>FUNCTION</scope>
</reference>
<reference key="7">
    <citation type="journal article" date="2005" name="Hear. Res.">
        <title>Taicatoxin inhibits the calcium-dependent slow motility of mammalian outer hair cells.</title>
        <authorList>
            <person name="Su M.-C."/>
            <person name="Lee S.-Y."/>
            <person name="Tan C.-T."/>
            <person name="Su C.-C."/>
            <person name="Li S.-Y."/>
            <person name="Lin R.-H."/>
            <person name="Hung C.-C."/>
            <person name="Lin M.-J."/>
        </authorList>
    </citation>
    <scope>FUNCTION</scope>
</reference>